<dbReference type="EMBL" id="CR522870">
    <property type="protein sequence ID" value="CAG35087.1"/>
    <property type="status" value="ALT_INIT"/>
    <property type="molecule type" value="Genomic_DNA"/>
</dbReference>
<dbReference type="RefSeq" id="WP_041277500.1">
    <property type="nucleotide sequence ID" value="NC_006138.1"/>
</dbReference>
<dbReference type="SMR" id="Q6ARD7"/>
<dbReference type="STRING" id="177439.DP0358"/>
<dbReference type="KEGG" id="dps:DP0358"/>
<dbReference type="eggNOG" id="COG3022">
    <property type="taxonomic scope" value="Bacteria"/>
</dbReference>
<dbReference type="HOGENOM" id="CLU_061989_0_0_7"/>
<dbReference type="Proteomes" id="UP000000602">
    <property type="component" value="Chromosome"/>
</dbReference>
<dbReference type="GO" id="GO:0005829">
    <property type="term" value="C:cytosol"/>
    <property type="evidence" value="ECO:0007669"/>
    <property type="project" value="TreeGrafter"/>
</dbReference>
<dbReference type="GO" id="GO:0033194">
    <property type="term" value="P:response to hydroperoxide"/>
    <property type="evidence" value="ECO:0007669"/>
    <property type="project" value="TreeGrafter"/>
</dbReference>
<dbReference type="HAMAP" id="MF_00652">
    <property type="entry name" value="UPF0246"/>
    <property type="match status" value="1"/>
</dbReference>
<dbReference type="InterPro" id="IPR005583">
    <property type="entry name" value="YaaA"/>
</dbReference>
<dbReference type="PANTHER" id="PTHR30283:SF4">
    <property type="entry name" value="PEROXIDE STRESS RESISTANCE PROTEIN YAAA"/>
    <property type="match status" value="1"/>
</dbReference>
<dbReference type="PANTHER" id="PTHR30283">
    <property type="entry name" value="PEROXIDE STRESS RESPONSE PROTEIN YAAA"/>
    <property type="match status" value="1"/>
</dbReference>
<dbReference type="Pfam" id="PF03883">
    <property type="entry name" value="H2O2_YaaD"/>
    <property type="match status" value="1"/>
</dbReference>
<sequence>MLIILAPSKKQTYPNCPNLVSTCPEFLQEAGQLNQILRAKTEKEIALLMKTSKILTENTLRDIRAFNGSEGRGFPAIFTFKGDAYDGIKAEDWNQEQMFYAQQHLRILSGLYGILRPLDLMQKHRLEMGLKLATHSGTQMYQFWGEKITDTINRQLDKGERCLINLSSTEYSRVIQKKKLDGRMIDIIFRQIKDGRARTIPIYAKRARGAMANFMVQEKIRDSEKLKNFSSEGYRFLPGESSEDSWVFSCTLNKK</sequence>
<evidence type="ECO:0000255" key="1">
    <source>
        <dbReference type="HAMAP-Rule" id="MF_00652"/>
    </source>
</evidence>
<evidence type="ECO:0000305" key="2"/>
<protein>
    <recommendedName>
        <fullName evidence="1">UPF0246 protein DP0358</fullName>
    </recommendedName>
</protein>
<keyword id="KW-1185">Reference proteome</keyword>
<name>Y358_DESPS</name>
<gene>
    <name type="ordered locus">DP0358</name>
</gene>
<comment type="similarity">
    <text evidence="1">Belongs to the UPF0246 family.</text>
</comment>
<comment type="sequence caution" evidence="2">
    <conflict type="erroneous initiation">
        <sequence resource="EMBL-CDS" id="CAG35087"/>
    </conflict>
</comment>
<reference key="1">
    <citation type="journal article" date="2004" name="Environ. Microbiol.">
        <title>The genome of Desulfotalea psychrophila, a sulfate-reducing bacterium from permanently cold Arctic sediments.</title>
        <authorList>
            <person name="Rabus R."/>
            <person name="Ruepp A."/>
            <person name="Frickey T."/>
            <person name="Rattei T."/>
            <person name="Fartmann B."/>
            <person name="Stark M."/>
            <person name="Bauer M."/>
            <person name="Zibat A."/>
            <person name="Lombardot T."/>
            <person name="Becker I."/>
            <person name="Amann J."/>
            <person name="Gellner K."/>
            <person name="Teeling H."/>
            <person name="Leuschner W.D."/>
            <person name="Gloeckner F.-O."/>
            <person name="Lupas A.N."/>
            <person name="Amann R."/>
            <person name="Klenk H.-P."/>
        </authorList>
    </citation>
    <scope>NUCLEOTIDE SEQUENCE [LARGE SCALE GENOMIC DNA]</scope>
    <source>
        <strain>DSM 12343 / LSv54</strain>
    </source>
</reference>
<accession>Q6ARD7</accession>
<feature type="chain" id="PRO_0000262013" description="UPF0246 protein DP0358">
    <location>
        <begin position="1"/>
        <end position="255"/>
    </location>
</feature>
<proteinExistence type="inferred from homology"/>
<organism>
    <name type="scientific">Desulfotalea psychrophila (strain LSv54 / DSM 12343)</name>
    <dbReference type="NCBI Taxonomy" id="177439"/>
    <lineage>
        <taxon>Bacteria</taxon>
        <taxon>Pseudomonadati</taxon>
        <taxon>Thermodesulfobacteriota</taxon>
        <taxon>Desulfobulbia</taxon>
        <taxon>Desulfobulbales</taxon>
        <taxon>Desulfocapsaceae</taxon>
        <taxon>Desulfotalea</taxon>
    </lineage>
</organism>